<accession>Q32I67</accession>
<feature type="signal peptide" evidence="1">
    <location>
        <begin position="1"/>
        <end position="16"/>
    </location>
</feature>
<feature type="chain" id="PRO_1000051814" description="UPF0194 membrane protein YbhG">
    <location>
        <begin position="17"/>
        <end position="332"/>
    </location>
</feature>
<feature type="coiled-coil region" evidence="1">
    <location>
        <begin position="108"/>
        <end position="209"/>
    </location>
</feature>
<comment type="subcellular location">
    <subcellularLocation>
        <location evidence="1">Periplasm</location>
    </subcellularLocation>
</comment>
<comment type="similarity">
    <text evidence="1">Belongs to the UPF0194 family.</text>
</comment>
<sequence length="332" mass="36421">MMKKTVVIGLAVVVLAAVVAGGYWWYQSRQDNGLTLYGNVDIRTVNLSFRVGGRVESLAVDEGDAIKAGQVLGELDHKPYEIALMQAKAGVSVAQAQYDLMLAGYRDEEIAQAAAAVKQAQAAYDYAQNFYNRQQGLWKSRTISANDLENARSSRDQAQATLKSAQDKLRQYRSGNREQDIAQAKASLEQAQAQLAQAELNLQDSTLIAPSDGTLLTRAVEPGTVLNEGGTVFTVSLTRPVWVRAYVDERNLDQAQPGRKVLLYTDGRPDKPYHGQIGFVSPTAEFTPKTVETPDLRTDLVYRLRIVVTDADDALRQGMPVTVQFGDEAGHE</sequence>
<protein>
    <recommendedName>
        <fullName evidence="1">UPF0194 membrane protein YbhG</fullName>
    </recommendedName>
</protein>
<dbReference type="EMBL" id="CP000034">
    <property type="protein sequence ID" value="ABB60990.1"/>
    <property type="molecule type" value="Genomic_DNA"/>
</dbReference>
<dbReference type="RefSeq" id="YP_402479.1">
    <property type="nucleotide sequence ID" value="NC_007606.1"/>
</dbReference>
<dbReference type="SMR" id="Q32I67"/>
<dbReference type="STRING" id="300267.SDY_0808"/>
<dbReference type="EnsemblBacteria" id="ABB60990">
    <property type="protein sequence ID" value="ABB60990"/>
    <property type="gene ID" value="SDY_0808"/>
</dbReference>
<dbReference type="KEGG" id="sdy:SDY_0808"/>
<dbReference type="PATRIC" id="fig|300267.13.peg.932"/>
<dbReference type="HOGENOM" id="CLU_018816_6_3_6"/>
<dbReference type="Proteomes" id="UP000002716">
    <property type="component" value="Chromosome"/>
</dbReference>
<dbReference type="GO" id="GO:0042597">
    <property type="term" value="C:periplasmic space"/>
    <property type="evidence" value="ECO:0007669"/>
    <property type="project" value="UniProtKB-SubCell"/>
</dbReference>
<dbReference type="FunFam" id="1.10.287.470:FF:000004">
    <property type="entry name" value="UPF0194 membrane protein YbhG"/>
    <property type="match status" value="1"/>
</dbReference>
<dbReference type="FunFam" id="2.40.30.170:FF:000005">
    <property type="entry name" value="UPF0194 membrane protein YbhG"/>
    <property type="match status" value="1"/>
</dbReference>
<dbReference type="FunFam" id="2.40.50.100:FF:000025">
    <property type="entry name" value="UPF0194 membrane protein YbhG"/>
    <property type="match status" value="1"/>
</dbReference>
<dbReference type="Gene3D" id="2.40.30.170">
    <property type="match status" value="1"/>
</dbReference>
<dbReference type="Gene3D" id="2.40.50.100">
    <property type="match status" value="2"/>
</dbReference>
<dbReference type="Gene3D" id="1.10.287.470">
    <property type="entry name" value="Helix hairpin bin"/>
    <property type="match status" value="2"/>
</dbReference>
<dbReference type="HAMAP" id="MF_01304">
    <property type="entry name" value="UPF0194"/>
    <property type="match status" value="1"/>
</dbReference>
<dbReference type="InterPro" id="IPR032317">
    <property type="entry name" value="CusB_D23"/>
</dbReference>
<dbReference type="InterPro" id="IPR022936">
    <property type="entry name" value="UPF0194_membrane_YbhG"/>
</dbReference>
<dbReference type="InterPro" id="IPR050465">
    <property type="entry name" value="UPF0194_transport"/>
</dbReference>
<dbReference type="NCBIfam" id="NF002939">
    <property type="entry name" value="PRK03598.1"/>
    <property type="match status" value="1"/>
</dbReference>
<dbReference type="PANTHER" id="PTHR32347">
    <property type="entry name" value="EFFLUX SYSTEM COMPONENT YKNX-RELATED"/>
    <property type="match status" value="1"/>
</dbReference>
<dbReference type="PANTHER" id="PTHR32347:SF29">
    <property type="entry name" value="UPF0194 MEMBRANE PROTEIN YBHG"/>
    <property type="match status" value="1"/>
</dbReference>
<dbReference type="Pfam" id="PF16576">
    <property type="entry name" value="HlyD_D23"/>
    <property type="match status" value="1"/>
</dbReference>
<dbReference type="SUPFAM" id="SSF111369">
    <property type="entry name" value="HlyD-like secretion proteins"/>
    <property type="match status" value="3"/>
</dbReference>
<keyword id="KW-0175">Coiled coil</keyword>
<keyword id="KW-0574">Periplasm</keyword>
<keyword id="KW-1185">Reference proteome</keyword>
<keyword id="KW-0732">Signal</keyword>
<reference key="1">
    <citation type="journal article" date="2005" name="Nucleic Acids Res.">
        <title>Genome dynamics and diversity of Shigella species, the etiologic agents of bacillary dysentery.</title>
        <authorList>
            <person name="Yang F."/>
            <person name="Yang J."/>
            <person name="Zhang X."/>
            <person name="Chen L."/>
            <person name="Jiang Y."/>
            <person name="Yan Y."/>
            <person name="Tang X."/>
            <person name="Wang J."/>
            <person name="Xiong Z."/>
            <person name="Dong J."/>
            <person name="Xue Y."/>
            <person name="Zhu Y."/>
            <person name="Xu X."/>
            <person name="Sun L."/>
            <person name="Chen S."/>
            <person name="Nie H."/>
            <person name="Peng J."/>
            <person name="Xu J."/>
            <person name="Wang Y."/>
            <person name="Yuan Z."/>
            <person name="Wen Y."/>
            <person name="Yao Z."/>
            <person name="Shen Y."/>
            <person name="Qiang B."/>
            <person name="Hou Y."/>
            <person name="Yu J."/>
            <person name="Jin Q."/>
        </authorList>
    </citation>
    <scope>NUCLEOTIDE SEQUENCE [LARGE SCALE GENOMIC DNA]</scope>
    <source>
        <strain>Sd197</strain>
    </source>
</reference>
<gene>
    <name evidence="1" type="primary">ybhG</name>
    <name type="ordered locus">SDY_0808</name>
</gene>
<proteinExistence type="inferred from homology"/>
<name>YBHG_SHIDS</name>
<organism>
    <name type="scientific">Shigella dysenteriae serotype 1 (strain Sd197)</name>
    <dbReference type="NCBI Taxonomy" id="300267"/>
    <lineage>
        <taxon>Bacteria</taxon>
        <taxon>Pseudomonadati</taxon>
        <taxon>Pseudomonadota</taxon>
        <taxon>Gammaproteobacteria</taxon>
        <taxon>Enterobacterales</taxon>
        <taxon>Enterobacteriaceae</taxon>
        <taxon>Shigella</taxon>
    </lineage>
</organism>
<evidence type="ECO:0000255" key="1">
    <source>
        <dbReference type="HAMAP-Rule" id="MF_01304"/>
    </source>
</evidence>